<evidence type="ECO:0000255" key="1">
    <source>
        <dbReference type="HAMAP-Rule" id="MF_00107"/>
    </source>
</evidence>
<proteinExistence type="inferred from homology"/>
<dbReference type="EC" id="4.6.1.12" evidence="1"/>
<dbReference type="EMBL" id="AP006841">
    <property type="protein sequence ID" value="BAD50748.1"/>
    <property type="molecule type" value="Genomic_DNA"/>
</dbReference>
<dbReference type="RefSeq" id="WP_005791741.1">
    <property type="nucleotide sequence ID" value="NZ_UYXF01000013.1"/>
</dbReference>
<dbReference type="RefSeq" id="YP_101282.1">
    <property type="nucleotide sequence ID" value="NC_006347.1"/>
</dbReference>
<dbReference type="SMR" id="Q64P34"/>
<dbReference type="STRING" id="295405.BF4006"/>
<dbReference type="KEGG" id="bfr:BF4006"/>
<dbReference type="PATRIC" id="fig|295405.11.peg.3855"/>
<dbReference type="HOGENOM" id="CLU_084630_2_0_10"/>
<dbReference type="OrthoDB" id="9804336at2"/>
<dbReference type="UniPathway" id="UPA00056">
    <property type="reaction ID" value="UER00095"/>
</dbReference>
<dbReference type="Proteomes" id="UP000002197">
    <property type="component" value="Chromosome"/>
</dbReference>
<dbReference type="GO" id="GO:0008685">
    <property type="term" value="F:2-C-methyl-D-erythritol 2,4-cyclodiphosphate synthase activity"/>
    <property type="evidence" value="ECO:0007669"/>
    <property type="project" value="UniProtKB-UniRule"/>
</dbReference>
<dbReference type="GO" id="GO:0046872">
    <property type="term" value="F:metal ion binding"/>
    <property type="evidence" value="ECO:0007669"/>
    <property type="project" value="UniProtKB-KW"/>
</dbReference>
<dbReference type="GO" id="GO:0019288">
    <property type="term" value="P:isopentenyl diphosphate biosynthetic process, methylerythritol 4-phosphate pathway"/>
    <property type="evidence" value="ECO:0007669"/>
    <property type="project" value="UniProtKB-UniRule"/>
</dbReference>
<dbReference type="GO" id="GO:0016114">
    <property type="term" value="P:terpenoid biosynthetic process"/>
    <property type="evidence" value="ECO:0007669"/>
    <property type="project" value="InterPro"/>
</dbReference>
<dbReference type="CDD" id="cd00554">
    <property type="entry name" value="MECDP_synthase"/>
    <property type="match status" value="1"/>
</dbReference>
<dbReference type="FunFam" id="3.30.1330.50:FF:000001">
    <property type="entry name" value="2-C-methyl-D-erythritol 2,4-cyclodiphosphate synthase"/>
    <property type="match status" value="1"/>
</dbReference>
<dbReference type="Gene3D" id="3.30.1330.50">
    <property type="entry name" value="2-C-methyl-D-erythritol 2,4-cyclodiphosphate synthase"/>
    <property type="match status" value="1"/>
</dbReference>
<dbReference type="HAMAP" id="MF_00107">
    <property type="entry name" value="IspF"/>
    <property type="match status" value="1"/>
</dbReference>
<dbReference type="InterPro" id="IPR003526">
    <property type="entry name" value="MECDP_synthase"/>
</dbReference>
<dbReference type="InterPro" id="IPR020555">
    <property type="entry name" value="MECDP_synthase_CS"/>
</dbReference>
<dbReference type="InterPro" id="IPR036571">
    <property type="entry name" value="MECDP_synthase_sf"/>
</dbReference>
<dbReference type="NCBIfam" id="TIGR00151">
    <property type="entry name" value="ispF"/>
    <property type="match status" value="1"/>
</dbReference>
<dbReference type="PANTHER" id="PTHR43181">
    <property type="entry name" value="2-C-METHYL-D-ERYTHRITOL 2,4-CYCLODIPHOSPHATE SYNTHASE, CHLOROPLASTIC"/>
    <property type="match status" value="1"/>
</dbReference>
<dbReference type="PANTHER" id="PTHR43181:SF1">
    <property type="entry name" value="2-C-METHYL-D-ERYTHRITOL 2,4-CYCLODIPHOSPHATE SYNTHASE, CHLOROPLASTIC"/>
    <property type="match status" value="1"/>
</dbReference>
<dbReference type="Pfam" id="PF02542">
    <property type="entry name" value="YgbB"/>
    <property type="match status" value="1"/>
</dbReference>
<dbReference type="SUPFAM" id="SSF69765">
    <property type="entry name" value="IpsF-like"/>
    <property type="match status" value="1"/>
</dbReference>
<dbReference type="PROSITE" id="PS01350">
    <property type="entry name" value="ISPF"/>
    <property type="match status" value="1"/>
</dbReference>
<organism>
    <name type="scientific">Bacteroides fragilis (strain YCH46)</name>
    <dbReference type="NCBI Taxonomy" id="295405"/>
    <lineage>
        <taxon>Bacteria</taxon>
        <taxon>Pseudomonadati</taxon>
        <taxon>Bacteroidota</taxon>
        <taxon>Bacteroidia</taxon>
        <taxon>Bacteroidales</taxon>
        <taxon>Bacteroidaceae</taxon>
        <taxon>Bacteroides</taxon>
    </lineage>
</organism>
<accession>Q64P34</accession>
<comment type="function">
    <text evidence="1">Involved in the biosynthesis of isopentenyl diphosphate (IPP) and dimethylallyl diphosphate (DMAPP), two major building blocks of isoprenoid compounds. Catalyzes the conversion of 4-diphosphocytidyl-2-C-methyl-D-erythritol 2-phosphate (CDP-ME2P) to 2-C-methyl-D-erythritol 2,4-cyclodiphosphate (ME-CPP) with a corresponding release of cytidine 5-monophosphate (CMP).</text>
</comment>
<comment type="catalytic activity">
    <reaction evidence="1">
        <text>4-CDP-2-C-methyl-D-erythritol 2-phosphate = 2-C-methyl-D-erythritol 2,4-cyclic diphosphate + CMP</text>
        <dbReference type="Rhea" id="RHEA:23864"/>
        <dbReference type="ChEBI" id="CHEBI:57919"/>
        <dbReference type="ChEBI" id="CHEBI:58483"/>
        <dbReference type="ChEBI" id="CHEBI:60377"/>
        <dbReference type="EC" id="4.6.1.12"/>
    </reaction>
</comment>
<comment type="cofactor">
    <cofactor evidence="1">
        <name>a divalent metal cation</name>
        <dbReference type="ChEBI" id="CHEBI:60240"/>
    </cofactor>
    <text evidence="1">Binds 1 divalent metal cation per subunit.</text>
</comment>
<comment type="pathway">
    <text evidence="1">Isoprenoid biosynthesis; isopentenyl diphosphate biosynthesis via DXP pathway; isopentenyl diphosphate from 1-deoxy-D-xylulose 5-phosphate: step 4/6.</text>
</comment>
<comment type="subunit">
    <text evidence="1">Homotrimer.</text>
</comment>
<comment type="similarity">
    <text evidence="1">Belongs to the IspF family.</text>
</comment>
<sequence>MKIKVGFGFDVHQLVEGRELWLGGILLEHEKGLLGHSDADVLVHAICDALLGAANMRDIGYHFPDNAGEYKNIDSKILLKKTVELIAAKGYQIGNIDATICAERPKLKAHIPSMQQVLAEVMGIDADDISIKATTTEKLGFTGREEGISAYATVLINRV</sequence>
<keyword id="KW-0414">Isoprene biosynthesis</keyword>
<keyword id="KW-0456">Lyase</keyword>
<keyword id="KW-0479">Metal-binding</keyword>
<gene>
    <name evidence="1" type="primary">ispF</name>
    <name type="ordered locus">BF4006</name>
</gene>
<feature type="chain" id="PRO_0000189437" description="2-C-methyl-D-erythritol 2,4-cyclodiphosphate synthase">
    <location>
        <begin position="1"/>
        <end position="159"/>
    </location>
</feature>
<feature type="binding site" evidence="1">
    <location>
        <begin position="10"/>
        <end position="12"/>
    </location>
    <ligand>
        <name>4-CDP-2-C-methyl-D-erythritol 2-phosphate</name>
        <dbReference type="ChEBI" id="CHEBI:57919"/>
    </ligand>
</feature>
<feature type="binding site" evidence="1">
    <location>
        <position position="10"/>
    </location>
    <ligand>
        <name>a divalent metal cation</name>
        <dbReference type="ChEBI" id="CHEBI:60240"/>
    </ligand>
</feature>
<feature type="binding site" evidence="1">
    <location>
        <position position="12"/>
    </location>
    <ligand>
        <name>a divalent metal cation</name>
        <dbReference type="ChEBI" id="CHEBI:60240"/>
    </ligand>
</feature>
<feature type="binding site" evidence="1">
    <location>
        <begin position="36"/>
        <end position="37"/>
    </location>
    <ligand>
        <name>4-CDP-2-C-methyl-D-erythritol 2-phosphate</name>
        <dbReference type="ChEBI" id="CHEBI:57919"/>
    </ligand>
</feature>
<feature type="binding site" evidence="1">
    <location>
        <position position="44"/>
    </location>
    <ligand>
        <name>a divalent metal cation</name>
        <dbReference type="ChEBI" id="CHEBI:60240"/>
    </ligand>
</feature>
<feature type="binding site" evidence="1">
    <location>
        <begin position="58"/>
        <end position="60"/>
    </location>
    <ligand>
        <name>4-CDP-2-C-methyl-D-erythritol 2-phosphate</name>
        <dbReference type="ChEBI" id="CHEBI:57919"/>
    </ligand>
</feature>
<feature type="binding site" evidence="1">
    <location>
        <begin position="134"/>
        <end position="137"/>
    </location>
    <ligand>
        <name>4-CDP-2-C-methyl-D-erythritol 2-phosphate</name>
        <dbReference type="ChEBI" id="CHEBI:57919"/>
    </ligand>
</feature>
<feature type="binding site" evidence="1">
    <location>
        <position position="141"/>
    </location>
    <ligand>
        <name>4-CDP-2-C-methyl-D-erythritol 2-phosphate</name>
        <dbReference type="ChEBI" id="CHEBI:57919"/>
    </ligand>
</feature>
<feature type="binding site" evidence="1">
    <location>
        <position position="144"/>
    </location>
    <ligand>
        <name>4-CDP-2-C-methyl-D-erythritol 2-phosphate</name>
        <dbReference type="ChEBI" id="CHEBI:57919"/>
    </ligand>
</feature>
<feature type="site" description="Transition state stabilizer" evidence="1">
    <location>
        <position position="36"/>
    </location>
</feature>
<feature type="site" description="Transition state stabilizer" evidence="1">
    <location>
        <position position="135"/>
    </location>
</feature>
<protein>
    <recommendedName>
        <fullName evidence="1">2-C-methyl-D-erythritol 2,4-cyclodiphosphate synthase</fullName>
        <shortName evidence="1">MECDP-synthase</shortName>
        <shortName evidence="1">MECPP-synthase</shortName>
        <shortName evidence="1">MECPS</shortName>
        <ecNumber evidence="1">4.6.1.12</ecNumber>
    </recommendedName>
</protein>
<name>ISPF_BACFR</name>
<reference key="1">
    <citation type="journal article" date="2004" name="Proc. Natl. Acad. Sci. U.S.A.">
        <title>Genomic analysis of Bacteroides fragilis reveals extensive DNA inversions regulating cell surface adaptation.</title>
        <authorList>
            <person name="Kuwahara T."/>
            <person name="Yamashita A."/>
            <person name="Hirakawa H."/>
            <person name="Nakayama H."/>
            <person name="Toh H."/>
            <person name="Okada N."/>
            <person name="Kuhara S."/>
            <person name="Hattori M."/>
            <person name="Hayashi T."/>
            <person name="Ohnishi Y."/>
        </authorList>
    </citation>
    <scope>NUCLEOTIDE SEQUENCE [LARGE SCALE GENOMIC DNA]</scope>
    <source>
        <strain>YCH46</strain>
    </source>
</reference>